<proteinExistence type="evidence at protein level"/>
<name>B3GTK_ARATH</name>
<protein>
    <recommendedName>
        <fullName evidence="9">Hydroxyproline O-galactosyltransferase GALT2</fullName>
        <shortName evidence="9">AtGALT2</shortName>
        <ecNumber evidence="5">2.4.1.-</ecNumber>
    </recommendedName>
    <alternativeName>
        <fullName evidence="10">Beta-1,3-galactosyltransferase 20</fullName>
    </alternativeName>
</protein>
<accession>A7XDQ9</accession>
<accession>Q9SUA8</accession>
<feature type="chain" id="PRO_0000359430" description="Hydroxyproline O-galactosyltransferase GALT2">
    <location>
        <begin position="1"/>
        <end position="684"/>
    </location>
</feature>
<feature type="topological domain" description="Cytoplasmic" evidence="10">
    <location>
        <begin position="1"/>
        <end position="22"/>
    </location>
</feature>
<feature type="transmembrane region" description="Helical; Signal-anchor for type II membrane protein" evidence="1">
    <location>
        <begin position="23"/>
        <end position="43"/>
    </location>
</feature>
<feature type="topological domain" description="Lumenal" evidence="10">
    <location>
        <begin position="44"/>
        <end position="684"/>
    </location>
</feature>
<feature type="domain" description="Galectin" evidence="2">
    <location>
        <begin position="191"/>
        <end position="405"/>
    </location>
</feature>
<feature type="region of interest" description="Disordered" evidence="3">
    <location>
        <begin position="80"/>
        <end position="102"/>
    </location>
</feature>
<feature type="glycosylation site" description="N-linked (GlcNAc...) asparagine" evidence="1">
    <location>
        <position position="103"/>
    </location>
</feature>
<feature type="glycosylation site" description="N-linked (GlcNAc...) asparagine" evidence="1">
    <location>
        <position position="127"/>
    </location>
</feature>
<feature type="glycosylation site" description="N-linked (GlcNAc...) asparagine" evidence="1">
    <location>
        <position position="162"/>
    </location>
</feature>
<feature type="glycosylation site" description="N-linked (GlcNAc...) asparagine" evidence="1">
    <location>
        <position position="524"/>
    </location>
</feature>
<feature type="glycosylation site" description="N-linked (GlcNAc...) asparagine" evidence="1">
    <location>
        <position position="632"/>
    </location>
</feature>
<sequence>MKRVKSESFRGVYSSRRFKLSHFLLAIAGFYLVFLAFKFPHFIEMVAMLSGDTGLDGALSDTSLDVSLSGSLRNDMLNRKLEDEDHQSGPSTTQKVSPEEKINGSKQIQPLLFRYGRISGEVMRRRNRTIHMSPFERMADEAWILGSKAWEDVDKFEVDKINESASIFEGKVESCPSQISMNGDDLNKANRIMLLPCGLAAGSSITILGTPQYAHKESVPQRSRLTRSYGMVLVSQFMVELQGLKTGDGEYPPKILHLNPRIKGDWNHRPVIEHNTCYRMQWGVAQRCDGTPSKKDADVLVDGFRRCEKWTQNDIIDMVDSKESKTTSWFKRFIGREQKPEVTWSFPFAEGKVFVLTLRAGIDGFHINVGGRHVSSFPYRPGFTIEDATGLAVTGDVDIHSIHATSLSTSHPSFSPQKAIEFSSEWKAPPLPGTPFRLFMGVLSATNHFSERMAVRKTWMQHPSIKSSDVVARFFVALNPRKEVNAMLKKEAEYFGDIVILPFMDRYELVVLKTIAICEFGVQNVTAPYIMKCDDDTFIRVESILKQIDGVSPEKSLYMGNLNLRHRPLRTGKWTVTWEEWPEAVYPPYANGPGYIISSNIAKYIVSQNSRHKLRLFKMEDVSMGLWVEQFNASMQPVEYSHSWKFCQYGCTLNYYTAHYQSPSQMMCLWDNLLKGRPQCCNFR</sequence>
<comment type="function">
    <text evidence="5 6 7">Possesses hydroxyproline O-galactosyltransferase activity. Transfers galactose from UDP-galactose to hydroxyproline residues in the arabinogalactan proteins (AGPs). Is specific for AGPs containing non-contiguous peptidyl hydroxyproline residues. Utilizes UDP-galactose solely as sugar donor. The addition of galactose onto the peptidyl hydroxyproline residues in AGP core proteins represents the first committed step in arabinogalactan polysaccharide addition. AGP glycans play essential roles in both vegetative and reproductive plant growth.</text>
</comment>
<comment type="cofactor">
    <cofactor evidence="7">
        <name>Mn(2+)</name>
        <dbReference type="ChEBI" id="CHEBI:29035"/>
    </cofactor>
</comment>
<comment type="biophysicochemical properties">
    <phDependence>
        <text evidence="5">Optimum pH is 6.5.</text>
    </phDependence>
</comment>
<comment type="pathway">
    <text evidence="10">Protein modification; protein glycosylation.</text>
</comment>
<comment type="subcellular location">
    <subcellularLocation>
        <location evidence="5">Golgi apparatus membrane</location>
        <topology evidence="10">Single-pass type II membrane protein</topology>
    </subcellularLocation>
</comment>
<comment type="alternative products">
    <event type="alternative splicing"/>
    <isoform>
        <id>A7XDQ9-1</id>
        <name>1</name>
        <sequence type="displayed"/>
    </isoform>
    <text>A number of isoforms are produced. According to EST sequences.</text>
</comment>
<comment type="tissue specificity">
    <text evidence="4">Expressed in stems and at lower levels in cauline leaves and siliques.</text>
</comment>
<comment type="induction">
    <text evidence="8">By salt stress.</text>
</comment>
<comment type="disruption phenotype">
    <text evidence="6 7">Reduced levels of arabinogalactan proteins (PubMed:25974423, PubMed:26690932). Defects in root hair growth, root elongation, pollen tube growth, flowering time, leaf development, silique length and inflorescence growth. Increased sensitivity to salt stress (PubMed:25974423).</text>
</comment>
<comment type="similarity">
    <text evidence="10">Belongs to the glycosyltransferase 31 family.</text>
</comment>
<comment type="sequence caution" evidence="10">
    <conflict type="erroneous gene model prediction">
        <sequence resource="EMBL-CDS" id="CAB45901"/>
    </conflict>
</comment>
<comment type="sequence caution" evidence="10">
    <conflict type="erroneous gene model prediction">
        <sequence resource="EMBL-CDS" id="CAB79106"/>
    </conflict>
</comment>
<dbReference type="EC" id="2.4.1.-" evidence="5"/>
<dbReference type="EMBL" id="EF428438">
    <property type="protein sequence ID" value="ABR58857.1"/>
    <property type="molecule type" value="mRNA"/>
</dbReference>
<dbReference type="EMBL" id="AL080282">
    <property type="protein sequence ID" value="CAB45901.1"/>
    <property type="status" value="ALT_SEQ"/>
    <property type="molecule type" value="Genomic_DNA"/>
</dbReference>
<dbReference type="EMBL" id="AL161554">
    <property type="protein sequence ID" value="CAB79106.1"/>
    <property type="status" value="ALT_SEQ"/>
    <property type="molecule type" value="Genomic_DNA"/>
</dbReference>
<dbReference type="EMBL" id="CP002687">
    <property type="protein sequence ID" value="AEE84393.1"/>
    <property type="molecule type" value="Genomic_DNA"/>
</dbReference>
<dbReference type="PIR" id="T10648">
    <property type="entry name" value="T10648"/>
</dbReference>
<dbReference type="RefSeq" id="NP_001154260.1">
    <molecule id="A7XDQ9-1"/>
    <property type="nucleotide sequence ID" value="NM_001160788.1"/>
</dbReference>
<dbReference type="SMR" id="A7XDQ9"/>
<dbReference type="BioGRID" id="13144">
    <property type="interactions" value="4"/>
</dbReference>
<dbReference type="FunCoup" id="A7XDQ9">
    <property type="interactions" value="1048"/>
</dbReference>
<dbReference type="STRING" id="3702.A7XDQ9"/>
<dbReference type="CAZy" id="GT31">
    <property type="family name" value="Glycosyltransferase Family 31"/>
</dbReference>
<dbReference type="GlyCosmos" id="A7XDQ9">
    <property type="glycosylation" value="5 sites, No reported glycans"/>
</dbReference>
<dbReference type="GlyGen" id="A7XDQ9">
    <property type="glycosylation" value="5 sites"/>
</dbReference>
<dbReference type="PaxDb" id="3702-AT4G21060.1"/>
<dbReference type="ProteomicsDB" id="241187">
    <molecule id="A7XDQ9-1"/>
</dbReference>
<dbReference type="EnsemblPlants" id="AT4G21060.2">
    <molecule id="A7XDQ9-1"/>
    <property type="protein sequence ID" value="AT4G21060.2"/>
    <property type="gene ID" value="AT4G21060"/>
</dbReference>
<dbReference type="GeneID" id="827853"/>
<dbReference type="Gramene" id="AT4G21060.2">
    <molecule id="A7XDQ9-1"/>
    <property type="protein sequence ID" value="AT4G21060.2"/>
    <property type="gene ID" value="AT4G21060"/>
</dbReference>
<dbReference type="KEGG" id="ath:AT4G21060"/>
<dbReference type="Araport" id="AT4G21060"/>
<dbReference type="TAIR" id="AT4G21060">
    <property type="gene designation" value="GALT2"/>
</dbReference>
<dbReference type="eggNOG" id="KOG2287">
    <property type="taxonomic scope" value="Eukaryota"/>
</dbReference>
<dbReference type="HOGENOM" id="CLU_017063_2_0_1"/>
<dbReference type="InParanoid" id="A7XDQ9"/>
<dbReference type="OMA" id="SKKSLYM"/>
<dbReference type="PhylomeDB" id="A7XDQ9"/>
<dbReference type="BioCyc" id="ARA:AT4G21060-MONOMER"/>
<dbReference type="UniPathway" id="UPA00378"/>
<dbReference type="PRO" id="PR:A7XDQ9"/>
<dbReference type="Proteomes" id="UP000006548">
    <property type="component" value="Chromosome 4"/>
</dbReference>
<dbReference type="ExpressionAtlas" id="A7XDQ9">
    <property type="expression patterns" value="baseline and differential"/>
</dbReference>
<dbReference type="GO" id="GO:0005783">
    <property type="term" value="C:endoplasmic reticulum"/>
    <property type="evidence" value="ECO:0000314"/>
    <property type="project" value="UniProtKB"/>
</dbReference>
<dbReference type="GO" id="GO:0005794">
    <property type="term" value="C:Golgi apparatus"/>
    <property type="evidence" value="ECO:0000314"/>
    <property type="project" value="UniProtKB"/>
</dbReference>
<dbReference type="GO" id="GO:0000139">
    <property type="term" value="C:Golgi membrane"/>
    <property type="evidence" value="ECO:0007669"/>
    <property type="project" value="UniProtKB-SubCell"/>
</dbReference>
<dbReference type="GO" id="GO:0030246">
    <property type="term" value="F:carbohydrate binding"/>
    <property type="evidence" value="ECO:0007669"/>
    <property type="project" value="InterPro"/>
</dbReference>
<dbReference type="GO" id="GO:1990714">
    <property type="term" value="F:hydroxyproline O-galactosyltransferase activity"/>
    <property type="evidence" value="ECO:0000314"/>
    <property type="project" value="UniProtKB"/>
</dbReference>
<dbReference type="GO" id="GO:0010405">
    <property type="term" value="P:arabinogalactan protein metabolic process"/>
    <property type="evidence" value="ECO:0000315"/>
    <property type="project" value="UniProtKB"/>
</dbReference>
<dbReference type="GO" id="GO:0018258">
    <property type="term" value="P:protein O-linked glycosylation via hydroxyproline"/>
    <property type="evidence" value="ECO:0000314"/>
    <property type="project" value="UniProtKB"/>
</dbReference>
<dbReference type="GO" id="GO:0080147">
    <property type="term" value="P:root hair cell development"/>
    <property type="evidence" value="ECO:0000315"/>
    <property type="project" value="UniProtKB"/>
</dbReference>
<dbReference type="CDD" id="cd00070">
    <property type="entry name" value="GLECT"/>
    <property type="match status" value="1"/>
</dbReference>
<dbReference type="FunFam" id="3.90.550.50:FF:000005">
    <property type="entry name" value="Hydroxyproline O-galactosyltransferase"/>
    <property type="match status" value="1"/>
</dbReference>
<dbReference type="FunFam" id="2.60.120.200:FF:000071">
    <property type="entry name" value="Hydroxyproline O-galactosyltransferase GALT2"/>
    <property type="match status" value="1"/>
</dbReference>
<dbReference type="FunFam" id="2.60.120.200:FF:000147">
    <property type="entry name" value="Hydroxyproline O-galactosyltransferase GALT2"/>
    <property type="match status" value="1"/>
</dbReference>
<dbReference type="Gene3D" id="2.60.120.200">
    <property type="match status" value="2"/>
</dbReference>
<dbReference type="Gene3D" id="3.90.550.50">
    <property type="match status" value="1"/>
</dbReference>
<dbReference type="InterPro" id="IPR013320">
    <property type="entry name" value="ConA-like_dom_sf"/>
</dbReference>
<dbReference type="InterPro" id="IPR001079">
    <property type="entry name" value="Galectin_CRD"/>
</dbReference>
<dbReference type="InterPro" id="IPR002659">
    <property type="entry name" value="Glyco_trans_31"/>
</dbReference>
<dbReference type="PANTHER" id="PTHR11214">
    <property type="entry name" value="BETA-1,3-N-ACETYLGLUCOSAMINYLTRANSFERASE"/>
    <property type="match status" value="1"/>
</dbReference>
<dbReference type="PANTHER" id="PTHR11214:SF212">
    <property type="entry name" value="HYDROXYPROLINE O-GALACTOSYLTRANSFERASE GALT2"/>
    <property type="match status" value="1"/>
</dbReference>
<dbReference type="Pfam" id="PF00337">
    <property type="entry name" value="Gal-bind_lectin"/>
    <property type="match status" value="1"/>
</dbReference>
<dbReference type="Pfam" id="PF01762">
    <property type="entry name" value="Galactosyl_T"/>
    <property type="match status" value="1"/>
</dbReference>
<dbReference type="SMART" id="SM00908">
    <property type="entry name" value="Gal-bind_lectin"/>
    <property type="match status" value="1"/>
</dbReference>
<dbReference type="SUPFAM" id="SSF49899">
    <property type="entry name" value="Concanavalin A-like lectins/glucanases"/>
    <property type="match status" value="1"/>
</dbReference>
<dbReference type="PROSITE" id="PS51304">
    <property type="entry name" value="GALECTIN"/>
    <property type="match status" value="1"/>
</dbReference>
<keyword id="KW-0025">Alternative splicing</keyword>
<keyword id="KW-0325">Glycoprotein</keyword>
<keyword id="KW-0328">Glycosyltransferase</keyword>
<keyword id="KW-0333">Golgi apparatus</keyword>
<keyword id="KW-0464">Manganese</keyword>
<keyword id="KW-0472">Membrane</keyword>
<keyword id="KW-1185">Reference proteome</keyword>
<keyword id="KW-0735">Signal-anchor</keyword>
<keyword id="KW-0808">Transferase</keyword>
<keyword id="KW-0812">Transmembrane</keyword>
<keyword id="KW-1133">Transmembrane helix</keyword>
<gene>
    <name evidence="9" type="primary">GALT2</name>
    <name evidence="11" type="synonym">B3GALT20</name>
    <name type="ordered locus">At4g21060</name>
    <name type="ORF">T13K14.220</name>
</gene>
<evidence type="ECO:0000255" key="1"/>
<evidence type="ECO:0000255" key="2">
    <source>
        <dbReference type="PROSITE-ProRule" id="PRU00639"/>
    </source>
</evidence>
<evidence type="ECO:0000256" key="3">
    <source>
        <dbReference type="SAM" id="MobiDB-lite"/>
    </source>
</evidence>
<evidence type="ECO:0000269" key="4">
    <source>
    </source>
</evidence>
<evidence type="ECO:0000269" key="5">
    <source>
    </source>
</evidence>
<evidence type="ECO:0000269" key="6">
    <source>
    </source>
</evidence>
<evidence type="ECO:0000269" key="7">
    <source>
    </source>
</evidence>
<evidence type="ECO:0000269" key="8">
    <source>
    </source>
</evidence>
<evidence type="ECO:0000303" key="9">
    <source>
    </source>
</evidence>
<evidence type="ECO:0000305" key="10"/>
<evidence type="ECO:0000305" key="11">
    <source>
    </source>
</evidence>
<organism>
    <name type="scientific">Arabidopsis thaliana</name>
    <name type="common">Mouse-ear cress</name>
    <dbReference type="NCBI Taxonomy" id="3702"/>
    <lineage>
        <taxon>Eukaryota</taxon>
        <taxon>Viridiplantae</taxon>
        <taxon>Streptophyta</taxon>
        <taxon>Embryophyta</taxon>
        <taxon>Tracheophyta</taxon>
        <taxon>Spermatophyta</taxon>
        <taxon>Magnoliopsida</taxon>
        <taxon>eudicotyledons</taxon>
        <taxon>Gunneridae</taxon>
        <taxon>Pentapetalae</taxon>
        <taxon>rosids</taxon>
        <taxon>malvids</taxon>
        <taxon>Brassicales</taxon>
        <taxon>Brassicaceae</taxon>
        <taxon>Camelineae</taxon>
        <taxon>Arabidopsis</taxon>
    </lineage>
</organism>
<reference key="1">
    <citation type="journal article" date="2007" name="Plant Cell">
        <title>A unique beta-1,3-galactosyltransferase is indispensable for the biosynthesis of N-glycans containing Lewis a structures in Arabidopsis thaliana.</title>
        <authorList>
            <person name="Strasser R."/>
            <person name="Bondili J.S."/>
            <person name="Vavra U."/>
            <person name="Schoberer J."/>
            <person name="Svoboda B."/>
            <person name="Gloessl J."/>
            <person name="Leonard R."/>
            <person name="Stadlmann J."/>
            <person name="Altmann F."/>
            <person name="Steinkellner H."/>
            <person name="Mach L."/>
        </authorList>
    </citation>
    <scope>NUCLEOTIDE SEQUENCE [MRNA]</scope>
    <scope>TISSUE SPECIFICITY</scope>
    <source>
        <strain>cv. Columbia</strain>
        <tissue>Leaf</tissue>
    </source>
</reference>
<reference key="2">
    <citation type="journal article" date="1999" name="Nature">
        <title>Sequence and analysis of chromosome 4 of the plant Arabidopsis thaliana.</title>
        <authorList>
            <person name="Mayer K.F.X."/>
            <person name="Schueller C."/>
            <person name="Wambutt R."/>
            <person name="Murphy G."/>
            <person name="Volckaert G."/>
            <person name="Pohl T."/>
            <person name="Duesterhoeft A."/>
            <person name="Stiekema W."/>
            <person name="Entian K.-D."/>
            <person name="Terryn N."/>
            <person name="Harris B."/>
            <person name="Ansorge W."/>
            <person name="Brandt P."/>
            <person name="Grivell L.A."/>
            <person name="Rieger M."/>
            <person name="Weichselgartner M."/>
            <person name="de Simone V."/>
            <person name="Obermaier B."/>
            <person name="Mache R."/>
            <person name="Mueller M."/>
            <person name="Kreis M."/>
            <person name="Delseny M."/>
            <person name="Puigdomenech P."/>
            <person name="Watson M."/>
            <person name="Schmidtheini T."/>
            <person name="Reichert B."/>
            <person name="Portetelle D."/>
            <person name="Perez-Alonso M."/>
            <person name="Boutry M."/>
            <person name="Bancroft I."/>
            <person name="Vos P."/>
            <person name="Hoheisel J."/>
            <person name="Zimmermann W."/>
            <person name="Wedler H."/>
            <person name="Ridley P."/>
            <person name="Langham S.-A."/>
            <person name="McCullagh B."/>
            <person name="Bilham L."/>
            <person name="Robben J."/>
            <person name="van der Schueren J."/>
            <person name="Grymonprez B."/>
            <person name="Chuang Y.-J."/>
            <person name="Vandenbussche F."/>
            <person name="Braeken M."/>
            <person name="Weltjens I."/>
            <person name="Voet M."/>
            <person name="Bastiaens I."/>
            <person name="Aert R."/>
            <person name="Defoor E."/>
            <person name="Weitzenegger T."/>
            <person name="Bothe G."/>
            <person name="Ramsperger U."/>
            <person name="Hilbert H."/>
            <person name="Braun M."/>
            <person name="Holzer E."/>
            <person name="Brandt A."/>
            <person name="Peters S."/>
            <person name="van Staveren M."/>
            <person name="Dirkse W."/>
            <person name="Mooijman P."/>
            <person name="Klein Lankhorst R."/>
            <person name="Rose M."/>
            <person name="Hauf J."/>
            <person name="Koetter P."/>
            <person name="Berneiser S."/>
            <person name="Hempel S."/>
            <person name="Feldpausch M."/>
            <person name="Lamberth S."/>
            <person name="Van den Daele H."/>
            <person name="De Keyser A."/>
            <person name="Buysshaert C."/>
            <person name="Gielen J."/>
            <person name="Villarroel R."/>
            <person name="De Clercq R."/>
            <person name="van Montagu M."/>
            <person name="Rogers J."/>
            <person name="Cronin A."/>
            <person name="Quail M.A."/>
            <person name="Bray-Allen S."/>
            <person name="Clark L."/>
            <person name="Doggett J."/>
            <person name="Hall S."/>
            <person name="Kay M."/>
            <person name="Lennard N."/>
            <person name="McLay K."/>
            <person name="Mayes R."/>
            <person name="Pettett A."/>
            <person name="Rajandream M.A."/>
            <person name="Lyne M."/>
            <person name="Benes V."/>
            <person name="Rechmann S."/>
            <person name="Borkova D."/>
            <person name="Bloecker H."/>
            <person name="Scharfe M."/>
            <person name="Grimm M."/>
            <person name="Loehnert T.-H."/>
            <person name="Dose S."/>
            <person name="de Haan M."/>
            <person name="Maarse A.C."/>
            <person name="Schaefer M."/>
            <person name="Mueller-Auer S."/>
            <person name="Gabel C."/>
            <person name="Fuchs M."/>
            <person name="Fartmann B."/>
            <person name="Granderath K."/>
            <person name="Dauner D."/>
            <person name="Herzl A."/>
            <person name="Neumann S."/>
            <person name="Argiriou A."/>
            <person name="Vitale D."/>
            <person name="Liguori R."/>
            <person name="Piravandi E."/>
            <person name="Massenet O."/>
            <person name="Quigley F."/>
            <person name="Clabauld G."/>
            <person name="Muendlein A."/>
            <person name="Felber R."/>
            <person name="Schnabl S."/>
            <person name="Hiller R."/>
            <person name="Schmidt W."/>
            <person name="Lecharny A."/>
            <person name="Aubourg S."/>
            <person name="Chefdor F."/>
            <person name="Cooke R."/>
            <person name="Berger C."/>
            <person name="Monfort A."/>
            <person name="Casacuberta E."/>
            <person name="Gibbons T."/>
            <person name="Weber N."/>
            <person name="Vandenbol M."/>
            <person name="Bargues M."/>
            <person name="Terol J."/>
            <person name="Torres A."/>
            <person name="Perez-Perez A."/>
            <person name="Purnelle B."/>
            <person name="Bent E."/>
            <person name="Johnson S."/>
            <person name="Tacon D."/>
            <person name="Jesse T."/>
            <person name="Heijnen L."/>
            <person name="Schwarz S."/>
            <person name="Scholler P."/>
            <person name="Heber S."/>
            <person name="Francs P."/>
            <person name="Bielke C."/>
            <person name="Frishman D."/>
            <person name="Haase D."/>
            <person name="Lemcke K."/>
            <person name="Mewes H.-W."/>
            <person name="Stocker S."/>
            <person name="Zaccaria P."/>
            <person name="Bevan M."/>
            <person name="Wilson R.K."/>
            <person name="de la Bastide M."/>
            <person name="Habermann K."/>
            <person name="Parnell L."/>
            <person name="Dedhia N."/>
            <person name="Gnoj L."/>
            <person name="Schutz K."/>
            <person name="Huang E."/>
            <person name="Spiegel L."/>
            <person name="Sekhon M."/>
            <person name="Murray J."/>
            <person name="Sheet P."/>
            <person name="Cordes M."/>
            <person name="Abu-Threideh J."/>
            <person name="Stoneking T."/>
            <person name="Kalicki J."/>
            <person name="Graves T."/>
            <person name="Harmon G."/>
            <person name="Edwards J."/>
            <person name="Latreille P."/>
            <person name="Courtney L."/>
            <person name="Cloud J."/>
            <person name="Abbott A."/>
            <person name="Scott K."/>
            <person name="Johnson D."/>
            <person name="Minx P."/>
            <person name="Bentley D."/>
            <person name="Fulton B."/>
            <person name="Miller N."/>
            <person name="Greco T."/>
            <person name="Kemp K."/>
            <person name="Kramer J."/>
            <person name="Fulton L."/>
            <person name="Mardis E."/>
            <person name="Dante M."/>
            <person name="Pepin K."/>
            <person name="Hillier L.W."/>
            <person name="Nelson J."/>
            <person name="Spieth J."/>
            <person name="Ryan E."/>
            <person name="Andrews S."/>
            <person name="Geisel C."/>
            <person name="Layman D."/>
            <person name="Du H."/>
            <person name="Ali J."/>
            <person name="Berghoff A."/>
            <person name="Jones K."/>
            <person name="Drone K."/>
            <person name="Cotton M."/>
            <person name="Joshu C."/>
            <person name="Antonoiu B."/>
            <person name="Zidanic M."/>
            <person name="Strong C."/>
            <person name="Sun H."/>
            <person name="Lamar B."/>
            <person name="Yordan C."/>
            <person name="Ma P."/>
            <person name="Zhong J."/>
            <person name="Preston R."/>
            <person name="Vil D."/>
            <person name="Shekher M."/>
            <person name="Matero A."/>
            <person name="Shah R."/>
            <person name="Swaby I.K."/>
            <person name="O'Shaughnessy A."/>
            <person name="Rodriguez M."/>
            <person name="Hoffman J."/>
            <person name="Till S."/>
            <person name="Granat S."/>
            <person name="Shohdy N."/>
            <person name="Hasegawa A."/>
            <person name="Hameed A."/>
            <person name="Lodhi M."/>
            <person name="Johnson A."/>
            <person name="Chen E."/>
            <person name="Marra M.A."/>
            <person name="Martienssen R."/>
            <person name="McCombie W.R."/>
        </authorList>
    </citation>
    <scope>NUCLEOTIDE SEQUENCE [LARGE SCALE GENOMIC DNA]</scope>
    <source>
        <strain>cv. Columbia</strain>
    </source>
</reference>
<reference key="3">
    <citation type="journal article" date="2017" name="Plant J.">
        <title>Araport11: a complete reannotation of the Arabidopsis thaliana reference genome.</title>
        <authorList>
            <person name="Cheng C.Y."/>
            <person name="Krishnakumar V."/>
            <person name="Chan A.P."/>
            <person name="Thibaud-Nissen F."/>
            <person name="Schobel S."/>
            <person name="Town C.D."/>
        </authorList>
    </citation>
    <scope>GENOME REANNOTATION</scope>
    <source>
        <strain>cv. Columbia</strain>
    </source>
</reference>
<reference key="4">
    <citation type="journal article" date="2008" name="Plant Mol. Biol.">
        <title>Identification of a novel group of putative Arabidopsis thaliana beta-(1,3)-galactosyltransferases.</title>
        <authorList>
            <person name="Qu Y."/>
            <person name="Egelund J."/>
            <person name="Gilson P.R."/>
            <person name="Houghton F."/>
            <person name="Gleeson P.A."/>
            <person name="Schultz C.J."/>
            <person name="Bacic A."/>
        </authorList>
    </citation>
    <scope>GENE FAMILY</scope>
    <scope>NOMENCLATURE</scope>
</reference>
<reference key="5">
    <citation type="journal article" date="2013" name="J. Biol. Chem.">
        <title>Functional identification of a hydroxyproline-o-galactosyltransferase specific for arabinogalactan protein biosynthesis in Arabidopsis.</title>
        <authorList>
            <person name="Basu D."/>
            <person name="Liang Y."/>
            <person name="Liu X."/>
            <person name="Himmeldirk K."/>
            <person name="Faik A."/>
            <person name="Kieliszewski M."/>
            <person name="Held M."/>
            <person name="Showalter A.M."/>
        </authorList>
    </citation>
    <scope>FUNCTION</scope>
    <scope>BIOPHYSICOCHEMICAL PROPERTIES</scope>
    <scope>SUBCELLULAR LOCATION</scope>
</reference>
<reference key="6">
    <citation type="journal article" date="2015" name="BMC Plant Biol.">
        <title>A small multigene hydroxyproline-O-galactosyltransferase family functions in arabinogalactan-protein glycosylation, growth and development in Arabidopsis.</title>
        <authorList>
            <person name="Basu D."/>
            <person name="Tian L."/>
            <person name="Wang W."/>
            <person name="Bobbs S."/>
            <person name="Herock H."/>
            <person name="Travers A."/>
            <person name="Showalter A.M."/>
        </authorList>
    </citation>
    <scope>FUNCTION</scope>
    <scope>COFACTOR</scope>
    <scope>DISRUPTION PHENOTYPE</scope>
</reference>
<reference key="7">
    <citation type="journal article" date="2015" name="PLoS ONE">
        <title>Two hydroxyproline galactosyltransferases, GALT5 and GALT2, function in arabinogalactan-protein glycosylation, growth and development in Arabidopsis.</title>
        <authorList>
            <person name="Basu D."/>
            <person name="Wang W."/>
            <person name="Ma S."/>
            <person name="DeBrosse T."/>
            <person name="Poirier E."/>
            <person name="Emch K."/>
            <person name="Soukup E."/>
            <person name="Tian L."/>
            <person name="Showalter A.M."/>
        </authorList>
    </citation>
    <scope>FUNCTION</scope>
    <scope>DISRUPTION PHENOTYPE</scope>
</reference>
<reference key="8">
    <citation type="journal article" date="2016" name="PLoS ONE">
        <title>Glycosylation of a fasciclin-like arabinogalactan-protein (SOS5) mediates root growth and seed mucilage adherence via a cell wall receptor-like kinase (FEI1/FEI2) pathway in Arabidopsis.</title>
        <authorList>
            <person name="Basu D."/>
            <person name="Tian L."/>
            <person name="Debrosse T."/>
            <person name="Poirier E."/>
            <person name="Emch K."/>
            <person name="Herock H."/>
            <person name="Travers A."/>
            <person name="Showalter A.M."/>
        </authorList>
    </citation>
    <scope>INDUCTION BY SALT STRESS</scope>
</reference>